<comment type="function">
    <text evidence="2 3">Sulfotransferase that utilizes 3'-phospho-5'-adenylyl sulfate (PAPS) as sulfonate donor to catalyze the transfer of sulfate to position 6 of internal galactose (Gal) residues of keratan. Cooperates with B4GALT4 and B3GNT7 glycosyltransferases and CHST6 sulfotransferase to construct and elongate disulfated disaccharide unit [-&gt;3(6-sulfoGalbeta)1-&gt;4(6-sulfoGlcNAcbeta)1-&gt;] within keratan sulfate polymer. Has a preference for sulfating keratan sulfate, but it also transfers sulfate to the unsulfated polymer (By similarity). Involved in biosynthesis of phosphacan, a major keratan sulfate proteoglycan in the developing brain (By similarity). Involved in biosynthesis of 6-sulfoGalbeta-containing O-linked glycans in high endothelial venules of lymph nodes. May act in a synergistic manner with CHST4 to generate sialyl 6',6-disulfo Lewis X motif, a recognition determinant for immune cell receptors implicated in leukocyte trafficking (By similarity). Catalyzes sulfation of N-acetyllactosamine (LacNAc) oligosaccharides with highest efficiency for sialylated LacNAc structures (By similarity).</text>
</comment>
<comment type="catalytic activity">
    <reaction evidence="2 3">
        <text>3'-phosphoadenylyl sulfate + keratan = adenosine 3',5'-bisphosphate + keratan 6'-sulfate.</text>
        <dbReference type="EC" id="2.8.2.21"/>
    </reaction>
</comment>
<comment type="pathway">
    <text evidence="2">Glycan metabolism.</text>
</comment>
<comment type="subcellular location">
    <subcellularLocation>
        <location evidence="1">Golgi apparatus membrane</location>
        <topology evidence="1">Single-pass type II membrane protein</topology>
    </subcellularLocation>
</comment>
<comment type="similarity">
    <text evidence="5">Belongs to the sulfotransferase 1 family. Gal/GlcNAc/GalNAc subfamily.</text>
</comment>
<accession>Q5RJQ0</accession>
<name>CHST1_RAT</name>
<protein>
    <recommendedName>
        <fullName>Carbohydrate sulfotransferase 1</fullName>
    </recommendedName>
    <alternativeName>
        <fullName>Galactose/N-acetylglucosamine/N-acetylglucosamine 6-O-sulfotransferase 1</fullName>
        <shortName>GST-1</shortName>
    </alternativeName>
    <alternativeName>
        <fullName>Keratan sulfate Gal-6 sulfotransferase</fullName>
        <shortName>KS6ST</shortName>
        <shortName>KSGal6ST</shortName>
        <shortName>KSST</shortName>
        <ecNumber evidence="2 3">2.8.2.21</ecNumber>
    </alternativeName>
</protein>
<dbReference type="EC" id="2.8.2.21" evidence="2 3"/>
<dbReference type="EMBL" id="BC086551">
    <property type="protein sequence ID" value="AAH86551.1"/>
    <property type="molecule type" value="mRNA"/>
</dbReference>
<dbReference type="RefSeq" id="NP_001011955.1">
    <property type="nucleotide sequence ID" value="NM_001011955.2"/>
</dbReference>
<dbReference type="RefSeq" id="XP_017447047.1">
    <property type="nucleotide sequence ID" value="XM_017591558.1"/>
</dbReference>
<dbReference type="RefSeq" id="XP_017447048.1">
    <property type="nucleotide sequence ID" value="XM_017591559.1"/>
</dbReference>
<dbReference type="RefSeq" id="XP_017447049.1">
    <property type="nucleotide sequence ID" value="XM_017591560.3"/>
</dbReference>
<dbReference type="RefSeq" id="XP_017447050.1">
    <property type="nucleotide sequence ID" value="XM_017591561.1"/>
</dbReference>
<dbReference type="RefSeq" id="XP_017447051.1">
    <property type="nucleotide sequence ID" value="XM_017591562.3"/>
</dbReference>
<dbReference type="RefSeq" id="XP_017447052.1">
    <property type="nucleotide sequence ID" value="XM_017591563.1"/>
</dbReference>
<dbReference type="RefSeq" id="XP_017447053.1">
    <property type="nucleotide sequence ID" value="XM_017591564.1"/>
</dbReference>
<dbReference type="RefSeq" id="XP_063139367.1">
    <property type="nucleotide sequence ID" value="XM_063283297.1"/>
</dbReference>
<dbReference type="RefSeq" id="XP_063139368.1">
    <property type="nucleotide sequence ID" value="XM_063283298.1"/>
</dbReference>
<dbReference type="FunCoup" id="Q5RJQ0">
    <property type="interactions" value="907"/>
</dbReference>
<dbReference type="STRING" id="10116.ENSRNOP00000010510"/>
<dbReference type="GlyCosmos" id="Q5RJQ0">
    <property type="glycosylation" value="4 sites, No reported glycans"/>
</dbReference>
<dbReference type="GlyGen" id="Q5RJQ0">
    <property type="glycosylation" value="4 sites"/>
</dbReference>
<dbReference type="PhosphoSitePlus" id="Q5RJQ0"/>
<dbReference type="PaxDb" id="10116-ENSRNOP00000010510"/>
<dbReference type="Ensembl" id="ENSRNOT00000010510.6">
    <property type="protein sequence ID" value="ENSRNOP00000010510.2"/>
    <property type="gene ID" value="ENSRNOG00000007989.6"/>
</dbReference>
<dbReference type="Ensembl" id="ENSRNOT00000095049.1">
    <property type="protein sequence ID" value="ENSRNOP00000090213.1"/>
    <property type="gene ID" value="ENSRNOG00000007989.6"/>
</dbReference>
<dbReference type="Ensembl" id="ENSRNOT00000095051.1">
    <property type="protein sequence ID" value="ENSRNOP00000081989.1"/>
    <property type="gene ID" value="ENSRNOG00000007989.6"/>
</dbReference>
<dbReference type="Ensembl" id="ENSRNOT00000098205.1">
    <property type="protein sequence ID" value="ENSRNOP00000087464.1"/>
    <property type="gene ID" value="ENSRNOG00000007989.6"/>
</dbReference>
<dbReference type="Ensembl" id="ENSRNOT00000113200.1">
    <property type="protein sequence ID" value="ENSRNOP00000079857.1"/>
    <property type="gene ID" value="ENSRNOG00000007989.6"/>
</dbReference>
<dbReference type="Ensembl" id="ENSRNOT00000114058.1">
    <property type="protein sequence ID" value="ENSRNOP00000086161.1"/>
    <property type="gene ID" value="ENSRNOG00000007989.6"/>
</dbReference>
<dbReference type="GeneID" id="295934"/>
<dbReference type="KEGG" id="rno:295934"/>
<dbReference type="UCSC" id="RGD:1308142">
    <property type="organism name" value="rat"/>
</dbReference>
<dbReference type="AGR" id="RGD:1308142"/>
<dbReference type="CTD" id="8534"/>
<dbReference type="RGD" id="1308142">
    <property type="gene designation" value="Chst1"/>
</dbReference>
<dbReference type="eggNOG" id="ENOG502S17I">
    <property type="taxonomic scope" value="Eukaryota"/>
</dbReference>
<dbReference type="GeneTree" id="ENSGT00940000161262"/>
<dbReference type="HOGENOM" id="CLU_028381_3_2_1"/>
<dbReference type="InParanoid" id="Q5RJQ0"/>
<dbReference type="OMA" id="NVKHWIR"/>
<dbReference type="OrthoDB" id="6138663at2759"/>
<dbReference type="PhylomeDB" id="Q5RJQ0"/>
<dbReference type="TreeFam" id="TF342871"/>
<dbReference type="Reactome" id="R-RNO-2022854">
    <property type="pathway name" value="Keratan sulfate biosynthesis"/>
</dbReference>
<dbReference type="PRO" id="PR:Q5RJQ0"/>
<dbReference type="Proteomes" id="UP000002494">
    <property type="component" value="Chromosome 3"/>
</dbReference>
<dbReference type="Bgee" id="ENSRNOG00000007989">
    <property type="expression patterns" value="Expressed in frontal cortex and 18 other cell types or tissues"/>
</dbReference>
<dbReference type="GO" id="GO:0000139">
    <property type="term" value="C:Golgi membrane"/>
    <property type="evidence" value="ECO:0007669"/>
    <property type="project" value="UniProtKB-SubCell"/>
</dbReference>
<dbReference type="GO" id="GO:0045130">
    <property type="term" value="F:keratan sulfotransferase activity"/>
    <property type="evidence" value="ECO:0000250"/>
    <property type="project" value="UniProtKB"/>
</dbReference>
<dbReference type="GO" id="GO:0001517">
    <property type="term" value="F:N-acetylglucosamine 6-O-sulfotransferase activity"/>
    <property type="evidence" value="ECO:0000318"/>
    <property type="project" value="GO_Central"/>
</dbReference>
<dbReference type="GO" id="GO:0008146">
    <property type="term" value="F:sulfotransferase activity"/>
    <property type="evidence" value="ECO:0000266"/>
    <property type="project" value="RGD"/>
</dbReference>
<dbReference type="GO" id="GO:0006012">
    <property type="term" value="P:galactose metabolic process"/>
    <property type="evidence" value="ECO:0000266"/>
    <property type="project" value="RGD"/>
</dbReference>
<dbReference type="GO" id="GO:0006954">
    <property type="term" value="P:inflammatory response"/>
    <property type="evidence" value="ECO:0007669"/>
    <property type="project" value="UniProtKB-KW"/>
</dbReference>
<dbReference type="GO" id="GO:0018146">
    <property type="term" value="P:keratan sulfate proteoglycan biosynthetic process"/>
    <property type="evidence" value="ECO:0000250"/>
    <property type="project" value="UniProtKB"/>
</dbReference>
<dbReference type="GO" id="GO:0042339">
    <property type="term" value="P:keratan sulfate proteoglycan metabolic process"/>
    <property type="evidence" value="ECO:0000266"/>
    <property type="project" value="RGD"/>
</dbReference>
<dbReference type="GO" id="GO:0006044">
    <property type="term" value="P:N-acetylglucosamine metabolic process"/>
    <property type="evidence" value="ECO:0000318"/>
    <property type="project" value="GO_Central"/>
</dbReference>
<dbReference type="GO" id="GO:0006790">
    <property type="term" value="P:sulfur compound metabolic process"/>
    <property type="evidence" value="ECO:0000266"/>
    <property type="project" value="RGD"/>
</dbReference>
<dbReference type="Gene3D" id="3.40.50.300">
    <property type="entry name" value="P-loop containing nucleotide triphosphate hydrolases"/>
    <property type="match status" value="1"/>
</dbReference>
<dbReference type="InterPro" id="IPR016469">
    <property type="entry name" value="Carbohydrate_sulfotransferase"/>
</dbReference>
<dbReference type="InterPro" id="IPR051135">
    <property type="entry name" value="Gal/GlcNAc/GalNAc_ST"/>
</dbReference>
<dbReference type="InterPro" id="IPR027417">
    <property type="entry name" value="P-loop_NTPase"/>
</dbReference>
<dbReference type="InterPro" id="IPR000863">
    <property type="entry name" value="Sulfotransferase_dom"/>
</dbReference>
<dbReference type="PANTHER" id="PTHR10704">
    <property type="entry name" value="CARBOHYDRATE SULFOTRANSFERASE"/>
    <property type="match status" value="1"/>
</dbReference>
<dbReference type="PANTHER" id="PTHR10704:SF36">
    <property type="entry name" value="CARBOHYDRATE SULFOTRANSFERASE 1"/>
    <property type="match status" value="1"/>
</dbReference>
<dbReference type="Pfam" id="PF00685">
    <property type="entry name" value="Sulfotransfer_1"/>
    <property type="match status" value="1"/>
</dbReference>
<dbReference type="PIRSF" id="PIRSF005883">
    <property type="entry name" value="Carbohydrate_sulfotransferase"/>
    <property type="match status" value="1"/>
</dbReference>
<dbReference type="SUPFAM" id="SSF52540">
    <property type="entry name" value="P-loop containing nucleoside triphosphate hydrolases"/>
    <property type="match status" value="1"/>
</dbReference>
<sequence>MQCSWKAVLLLALASIAIQYTAIRTFTAKSFHTCPGLTETGLAERLCEEGPTFSYNLSRKTHVLILATTRSGSSFVGQLFNQHMDVFYLFEPLYHVQNTLIPRFTQGKSPADRRVMLGASRDLLRSLYDCDLYFLENYIKPPPVNHTTDRVFRRGASRVLCSRPVCDPPGASDLILEEGDCVRKCGLLNLTLAAEACRERSHVAIKTVRVPEVNDLRALVEDPRLNLKVIQLVRDPRGILASRSETFRDTYRLWRLWYGTGRKPYNLDVTQLTTVCEDFSSSVSTGLMRPSWLKGKYMLVRYEDLARNPMKKTEEIYEFLGIPLDSHVARWIQNNTRGDPTLGKHKYGTVRNSAATAEKWRFRLSYDIVAFAQNACQHVLAQLGYKMATSEEELKNPAISLVEERDFRPFL</sequence>
<keyword id="KW-0119">Carbohydrate metabolism</keyword>
<keyword id="KW-0325">Glycoprotein</keyword>
<keyword id="KW-0333">Golgi apparatus</keyword>
<keyword id="KW-0395">Inflammatory response</keyword>
<keyword id="KW-0472">Membrane</keyword>
<keyword id="KW-1185">Reference proteome</keyword>
<keyword id="KW-0735">Signal-anchor</keyword>
<keyword id="KW-0808">Transferase</keyword>
<keyword id="KW-0812">Transmembrane</keyword>
<keyword id="KW-1133">Transmembrane helix</keyword>
<reference key="1">
    <citation type="journal article" date="2004" name="Genome Res.">
        <title>The status, quality, and expansion of the NIH full-length cDNA project: the Mammalian Gene Collection (MGC).</title>
        <authorList>
            <consortium name="The MGC Project Team"/>
        </authorList>
    </citation>
    <scope>NUCLEOTIDE SEQUENCE [LARGE SCALE MRNA]</scope>
    <source>
        <tissue>Ovary</tissue>
    </source>
</reference>
<organism>
    <name type="scientific">Rattus norvegicus</name>
    <name type="common">Rat</name>
    <dbReference type="NCBI Taxonomy" id="10116"/>
    <lineage>
        <taxon>Eukaryota</taxon>
        <taxon>Metazoa</taxon>
        <taxon>Chordata</taxon>
        <taxon>Craniata</taxon>
        <taxon>Vertebrata</taxon>
        <taxon>Euteleostomi</taxon>
        <taxon>Mammalia</taxon>
        <taxon>Eutheria</taxon>
        <taxon>Euarchontoglires</taxon>
        <taxon>Glires</taxon>
        <taxon>Rodentia</taxon>
        <taxon>Myomorpha</taxon>
        <taxon>Muroidea</taxon>
        <taxon>Muridae</taxon>
        <taxon>Murinae</taxon>
        <taxon>Rattus</taxon>
    </lineage>
</organism>
<gene>
    <name type="primary">Chst1</name>
</gene>
<proteinExistence type="evidence at transcript level"/>
<feature type="chain" id="PRO_0000085184" description="Carbohydrate sulfotransferase 1">
    <location>
        <begin position="1"/>
        <end position="411"/>
    </location>
</feature>
<feature type="topological domain" description="Cytoplasmic" evidence="4">
    <location>
        <position position="1"/>
    </location>
</feature>
<feature type="transmembrane region" description="Helical; Signal-anchor for type II membrane protein" evidence="4">
    <location>
        <begin position="2"/>
        <end position="23"/>
    </location>
</feature>
<feature type="topological domain" description="Lumenal" evidence="4">
    <location>
        <begin position="24"/>
        <end position="411"/>
    </location>
</feature>
<feature type="short sequence motif" description="Cell attachment site" evidence="4">
    <location>
        <begin position="337"/>
        <end position="339"/>
    </location>
</feature>
<feature type="binding site" evidence="1">
    <location>
        <begin position="69"/>
        <end position="75"/>
    </location>
    <ligand>
        <name>3'-phosphoadenylyl sulfate</name>
        <dbReference type="ChEBI" id="CHEBI:58339"/>
    </ligand>
</feature>
<feature type="binding site" evidence="1">
    <location>
        <begin position="234"/>
        <end position="242"/>
    </location>
    <ligand>
        <name>3'-phosphoadenylyl sulfate</name>
        <dbReference type="ChEBI" id="CHEBI:58339"/>
    </ligand>
</feature>
<feature type="glycosylation site" description="N-linked (GlcNAc...) asparagine" evidence="4">
    <location>
        <position position="56"/>
    </location>
</feature>
<feature type="glycosylation site" description="N-linked (GlcNAc...) asparagine" evidence="4">
    <location>
        <position position="145"/>
    </location>
</feature>
<feature type="glycosylation site" description="N-linked (GlcNAc...) asparagine" evidence="4">
    <location>
        <position position="189"/>
    </location>
</feature>
<feature type="glycosylation site" description="N-linked (GlcNAc...) asparagine" evidence="4">
    <location>
        <position position="334"/>
    </location>
</feature>
<evidence type="ECO:0000250" key="1"/>
<evidence type="ECO:0000250" key="2">
    <source>
        <dbReference type="UniProtKB" id="O43916"/>
    </source>
</evidence>
<evidence type="ECO:0000250" key="3">
    <source>
        <dbReference type="UniProtKB" id="Q9EQC0"/>
    </source>
</evidence>
<evidence type="ECO:0000255" key="4"/>
<evidence type="ECO:0000305" key="5"/>